<organism>
    <name type="scientific">Bacillus pumilus (strain SAFR-032)</name>
    <dbReference type="NCBI Taxonomy" id="315750"/>
    <lineage>
        <taxon>Bacteria</taxon>
        <taxon>Bacillati</taxon>
        <taxon>Bacillota</taxon>
        <taxon>Bacilli</taxon>
        <taxon>Bacillales</taxon>
        <taxon>Bacillaceae</taxon>
        <taxon>Bacillus</taxon>
    </lineage>
</organism>
<reference key="1">
    <citation type="journal article" date="2007" name="PLoS ONE">
        <title>Paradoxical DNA repair and peroxide resistance gene conservation in Bacillus pumilus SAFR-032.</title>
        <authorList>
            <person name="Gioia J."/>
            <person name="Yerrapragada S."/>
            <person name="Qin X."/>
            <person name="Jiang H."/>
            <person name="Igboeli O.C."/>
            <person name="Muzny D."/>
            <person name="Dugan-Rocha S."/>
            <person name="Ding Y."/>
            <person name="Hawes A."/>
            <person name="Liu W."/>
            <person name="Perez L."/>
            <person name="Kovar C."/>
            <person name="Dinh H."/>
            <person name="Lee S."/>
            <person name="Nazareth L."/>
            <person name="Blyth P."/>
            <person name="Holder M."/>
            <person name="Buhay C."/>
            <person name="Tirumalai M.R."/>
            <person name="Liu Y."/>
            <person name="Dasgupta I."/>
            <person name="Bokhetache L."/>
            <person name="Fujita M."/>
            <person name="Karouia F."/>
            <person name="Eswara Moorthy P."/>
            <person name="Siefert J."/>
            <person name="Uzman A."/>
            <person name="Buzumbo P."/>
            <person name="Verma A."/>
            <person name="Zwiya H."/>
            <person name="McWilliams B.D."/>
            <person name="Olowu A."/>
            <person name="Clinkenbeard K.D."/>
            <person name="Newcombe D."/>
            <person name="Golebiewski L."/>
            <person name="Petrosino J.F."/>
            <person name="Nicholson W.L."/>
            <person name="Fox G.E."/>
            <person name="Venkateswaran K."/>
            <person name="Highlander S.K."/>
            <person name="Weinstock G.M."/>
        </authorList>
    </citation>
    <scope>NUCLEOTIDE SEQUENCE [LARGE SCALE GENOMIC DNA]</scope>
    <source>
        <strain>SAFR-032</strain>
    </source>
</reference>
<proteinExistence type="inferred from homology"/>
<comment type="catalytic activity">
    <reaction evidence="1">
        <text>2-formamido-N(1)-(5-O-phospho-beta-D-ribosyl)acetamidine + ATP = 5-amino-1-(5-phospho-beta-D-ribosyl)imidazole + ADP + phosphate + H(+)</text>
        <dbReference type="Rhea" id="RHEA:23032"/>
        <dbReference type="ChEBI" id="CHEBI:15378"/>
        <dbReference type="ChEBI" id="CHEBI:30616"/>
        <dbReference type="ChEBI" id="CHEBI:43474"/>
        <dbReference type="ChEBI" id="CHEBI:137981"/>
        <dbReference type="ChEBI" id="CHEBI:147287"/>
        <dbReference type="ChEBI" id="CHEBI:456216"/>
        <dbReference type="EC" id="6.3.3.1"/>
    </reaction>
</comment>
<comment type="pathway">
    <text evidence="1">Purine metabolism; IMP biosynthesis via de novo pathway; 5-amino-1-(5-phospho-D-ribosyl)imidazole from N(2)-formyl-N(1)-(5-phospho-D-ribosyl)glycinamide: step 2/2.</text>
</comment>
<comment type="subcellular location">
    <subcellularLocation>
        <location evidence="1">Cytoplasm</location>
    </subcellularLocation>
</comment>
<comment type="similarity">
    <text evidence="1">Belongs to the AIR synthase family.</text>
</comment>
<gene>
    <name evidence="1" type="primary">purM</name>
    <name type="ordered locus">BPUM_0604</name>
</gene>
<sequence length="346" mass="37015">MSEAYKNAGVDIEAGYEAVKRMKTHVERTKRAGVMGALGGFGGMFDLSELPYKKPVLVSGTDGVGTKLKLAFLMDKHDTIGVDAVAMCVNDVLAQGAEPLFFLDYLAVGKADPVKIESIVKGVADGCEQSGSALVGGETAEMPGLYTEEEYDIAGFSVGVVEKDEIVTGNSIKEGHLLIGLSSSGIHSNGYSLVRKVLLEDAGLDLHQTYEPFKRPLGEELLEPTKIYVKPVLKQVKAGKVDGMAHVTGGGFIENLPRMLPEGLGVEIDNGSWPVPPIFSFIQEKGQLKAEEMFNVFNMGIGFVLAVKEDDLVDVIRELEQDGEKAFLIGRVQKGEGVTFGGGSLS</sequence>
<keyword id="KW-0067">ATP-binding</keyword>
<keyword id="KW-0963">Cytoplasm</keyword>
<keyword id="KW-0436">Ligase</keyword>
<keyword id="KW-0547">Nucleotide-binding</keyword>
<keyword id="KW-0658">Purine biosynthesis</keyword>
<protein>
    <recommendedName>
        <fullName evidence="1">Phosphoribosylformylglycinamidine cyclo-ligase</fullName>
        <ecNumber evidence="1">6.3.3.1</ecNumber>
    </recommendedName>
    <alternativeName>
        <fullName evidence="1">AIR synthase</fullName>
    </alternativeName>
    <alternativeName>
        <fullName evidence="1">AIRS</fullName>
    </alternativeName>
    <alternativeName>
        <fullName evidence="1">Phosphoribosyl-aminoimidazole synthetase</fullName>
    </alternativeName>
</protein>
<name>PUR5_BACP2</name>
<accession>A8FAM9</accession>
<feature type="chain" id="PRO_1000062156" description="Phosphoribosylformylglycinamidine cyclo-ligase">
    <location>
        <begin position="1"/>
        <end position="346"/>
    </location>
</feature>
<dbReference type="EC" id="6.3.3.1" evidence="1"/>
<dbReference type="EMBL" id="CP000813">
    <property type="protein sequence ID" value="ABV61296.1"/>
    <property type="molecule type" value="Genomic_DNA"/>
</dbReference>
<dbReference type="RefSeq" id="WP_012009145.1">
    <property type="nucleotide sequence ID" value="NZ_VEIA01000005.1"/>
</dbReference>
<dbReference type="SMR" id="A8FAM9"/>
<dbReference type="STRING" id="315750.BPUM_0604"/>
<dbReference type="GeneID" id="5619852"/>
<dbReference type="KEGG" id="bpu:BPUM_0604"/>
<dbReference type="eggNOG" id="COG0150">
    <property type="taxonomic scope" value="Bacteria"/>
</dbReference>
<dbReference type="HOGENOM" id="CLU_047116_0_0_9"/>
<dbReference type="OrthoDB" id="9802507at2"/>
<dbReference type="UniPathway" id="UPA00074">
    <property type="reaction ID" value="UER00129"/>
</dbReference>
<dbReference type="Proteomes" id="UP000001355">
    <property type="component" value="Chromosome"/>
</dbReference>
<dbReference type="GO" id="GO:0005829">
    <property type="term" value="C:cytosol"/>
    <property type="evidence" value="ECO:0007669"/>
    <property type="project" value="TreeGrafter"/>
</dbReference>
<dbReference type="GO" id="GO:0005524">
    <property type="term" value="F:ATP binding"/>
    <property type="evidence" value="ECO:0007669"/>
    <property type="project" value="UniProtKB-KW"/>
</dbReference>
<dbReference type="GO" id="GO:0004637">
    <property type="term" value="F:phosphoribosylamine-glycine ligase activity"/>
    <property type="evidence" value="ECO:0007669"/>
    <property type="project" value="TreeGrafter"/>
</dbReference>
<dbReference type="GO" id="GO:0004641">
    <property type="term" value="F:phosphoribosylformylglycinamidine cyclo-ligase activity"/>
    <property type="evidence" value="ECO:0007669"/>
    <property type="project" value="UniProtKB-UniRule"/>
</dbReference>
<dbReference type="GO" id="GO:0006189">
    <property type="term" value="P:'de novo' IMP biosynthetic process"/>
    <property type="evidence" value="ECO:0007669"/>
    <property type="project" value="UniProtKB-UniRule"/>
</dbReference>
<dbReference type="GO" id="GO:0046084">
    <property type="term" value="P:adenine biosynthetic process"/>
    <property type="evidence" value="ECO:0007669"/>
    <property type="project" value="TreeGrafter"/>
</dbReference>
<dbReference type="CDD" id="cd02196">
    <property type="entry name" value="PurM"/>
    <property type="match status" value="1"/>
</dbReference>
<dbReference type="FunFam" id="3.30.1330.10:FF:000001">
    <property type="entry name" value="Phosphoribosylformylglycinamidine cyclo-ligase"/>
    <property type="match status" value="1"/>
</dbReference>
<dbReference type="FunFam" id="3.90.650.10:FF:000001">
    <property type="entry name" value="Phosphoribosylformylglycinamidine cyclo-ligase"/>
    <property type="match status" value="1"/>
</dbReference>
<dbReference type="Gene3D" id="3.90.650.10">
    <property type="entry name" value="PurM-like C-terminal domain"/>
    <property type="match status" value="1"/>
</dbReference>
<dbReference type="Gene3D" id="3.30.1330.10">
    <property type="entry name" value="PurM-like, N-terminal domain"/>
    <property type="match status" value="1"/>
</dbReference>
<dbReference type="HAMAP" id="MF_00741">
    <property type="entry name" value="AIRS"/>
    <property type="match status" value="1"/>
</dbReference>
<dbReference type="InterPro" id="IPR010918">
    <property type="entry name" value="PurM-like_C_dom"/>
</dbReference>
<dbReference type="InterPro" id="IPR036676">
    <property type="entry name" value="PurM-like_C_sf"/>
</dbReference>
<dbReference type="InterPro" id="IPR016188">
    <property type="entry name" value="PurM-like_N"/>
</dbReference>
<dbReference type="InterPro" id="IPR036921">
    <property type="entry name" value="PurM-like_N_sf"/>
</dbReference>
<dbReference type="InterPro" id="IPR004733">
    <property type="entry name" value="PurM_cligase"/>
</dbReference>
<dbReference type="NCBIfam" id="TIGR00878">
    <property type="entry name" value="purM"/>
    <property type="match status" value="1"/>
</dbReference>
<dbReference type="PANTHER" id="PTHR10520:SF12">
    <property type="entry name" value="TRIFUNCTIONAL PURINE BIOSYNTHETIC PROTEIN ADENOSINE-3"/>
    <property type="match status" value="1"/>
</dbReference>
<dbReference type="PANTHER" id="PTHR10520">
    <property type="entry name" value="TRIFUNCTIONAL PURINE BIOSYNTHETIC PROTEIN ADENOSINE-3-RELATED"/>
    <property type="match status" value="1"/>
</dbReference>
<dbReference type="Pfam" id="PF00586">
    <property type="entry name" value="AIRS"/>
    <property type="match status" value="1"/>
</dbReference>
<dbReference type="Pfam" id="PF02769">
    <property type="entry name" value="AIRS_C"/>
    <property type="match status" value="1"/>
</dbReference>
<dbReference type="SUPFAM" id="SSF56042">
    <property type="entry name" value="PurM C-terminal domain-like"/>
    <property type="match status" value="1"/>
</dbReference>
<dbReference type="SUPFAM" id="SSF55326">
    <property type="entry name" value="PurM N-terminal domain-like"/>
    <property type="match status" value="1"/>
</dbReference>
<evidence type="ECO:0000255" key="1">
    <source>
        <dbReference type="HAMAP-Rule" id="MF_00741"/>
    </source>
</evidence>